<organism>
    <name type="scientific">Maricaulis maris (strain MCS10)</name>
    <name type="common">Caulobacter maris</name>
    <dbReference type="NCBI Taxonomy" id="394221"/>
    <lineage>
        <taxon>Bacteria</taxon>
        <taxon>Pseudomonadati</taxon>
        <taxon>Pseudomonadota</taxon>
        <taxon>Alphaproteobacteria</taxon>
        <taxon>Maricaulales</taxon>
        <taxon>Maricaulaceae</taxon>
        <taxon>Maricaulis</taxon>
    </lineage>
</organism>
<accession>Q0AQ78</accession>
<comment type="function">
    <text evidence="1">Catalyzes a trans-dehydration via an enolate intermediate.</text>
</comment>
<comment type="catalytic activity">
    <reaction evidence="1">
        <text>3-dehydroquinate = 3-dehydroshikimate + H2O</text>
        <dbReference type="Rhea" id="RHEA:21096"/>
        <dbReference type="ChEBI" id="CHEBI:15377"/>
        <dbReference type="ChEBI" id="CHEBI:16630"/>
        <dbReference type="ChEBI" id="CHEBI:32364"/>
        <dbReference type="EC" id="4.2.1.10"/>
    </reaction>
</comment>
<comment type="pathway">
    <text evidence="1">Metabolic intermediate biosynthesis; chorismate biosynthesis; chorismate from D-erythrose 4-phosphate and phosphoenolpyruvate: step 3/7.</text>
</comment>
<comment type="subunit">
    <text evidence="1">Homododecamer.</text>
</comment>
<comment type="similarity">
    <text evidence="1">Belongs to the type-II 3-dehydroquinase family.</text>
</comment>
<name>AROQ_MARMM</name>
<proteinExistence type="inferred from homology"/>
<dbReference type="EC" id="4.2.1.10" evidence="1"/>
<dbReference type="EMBL" id="CP000449">
    <property type="protein sequence ID" value="ABI65559.1"/>
    <property type="molecule type" value="Genomic_DNA"/>
</dbReference>
<dbReference type="RefSeq" id="WP_011643206.1">
    <property type="nucleotide sequence ID" value="NC_008347.1"/>
</dbReference>
<dbReference type="SMR" id="Q0AQ78"/>
<dbReference type="STRING" id="394221.Mmar10_1267"/>
<dbReference type="KEGG" id="mmr:Mmar10_1267"/>
<dbReference type="eggNOG" id="COG0757">
    <property type="taxonomic scope" value="Bacteria"/>
</dbReference>
<dbReference type="HOGENOM" id="CLU_090968_2_0_5"/>
<dbReference type="OrthoDB" id="9790793at2"/>
<dbReference type="UniPathway" id="UPA00053">
    <property type="reaction ID" value="UER00086"/>
</dbReference>
<dbReference type="Proteomes" id="UP000001964">
    <property type="component" value="Chromosome"/>
</dbReference>
<dbReference type="GO" id="GO:0003855">
    <property type="term" value="F:3-dehydroquinate dehydratase activity"/>
    <property type="evidence" value="ECO:0007669"/>
    <property type="project" value="UniProtKB-UniRule"/>
</dbReference>
<dbReference type="GO" id="GO:0008652">
    <property type="term" value="P:amino acid biosynthetic process"/>
    <property type="evidence" value="ECO:0007669"/>
    <property type="project" value="UniProtKB-KW"/>
</dbReference>
<dbReference type="GO" id="GO:0009073">
    <property type="term" value="P:aromatic amino acid family biosynthetic process"/>
    <property type="evidence" value="ECO:0007669"/>
    <property type="project" value="UniProtKB-KW"/>
</dbReference>
<dbReference type="GO" id="GO:0009423">
    <property type="term" value="P:chorismate biosynthetic process"/>
    <property type="evidence" value="ECO:0007669"/>
    <property type="project" value="UniProtKB-UniRule"/>
</dbReference>
<dbReference type="GO" id="GO:0019631">
    <property type="term" value="P:quinate catabolic process"/>
    <property type="evidence" value="ECO:0007669"/>
    <property type="project" value="TreeGrafter"/>
</dbReference>
<dbReference type="CDD" id="cd00466">
    <property type="entry name" value="DHQase_II"/>
    <property type="match status" value="1"/>
</dbReference>
<dbReference type="Gene3D" id="3.40.50.9100">
    <property type="entry name" value="Dehydroquinase, class II"/>
    <property type="match status" value="1"/>
</dbReference>
<dbReference type="HAMAP" id="MF_00169">
    <property type="entry name" value="AroQ"/>
    <property type="match status" value="1"/>
</dbReference>
<dbReference type="InterPro" id="IPR001874">
    <property type="entry name" value="DHquinase_II"/>
</dbReference>
<dbReference type="InterPro" id="IPR018509">
    <property type="entry name" value="DHquinase_II_CS"/>
</dbReference>
<dbReference type="InterPro" id="IPR036441">
    <property type="entry name" value="DHquinase_II_sf"/>
</dbReference>
<dbReference type="NCBIfam" id="TIGR01088">
    <property type="entry name" value="aroQ"/>
    <property type="match status" value="1"/>
</dbReference>
<dbReference type="NCBIfam" id="NF003805">
    <property type="entry name" value="PRK05395.1-2"/>
    <property type="match status" value="1"/>
</dbReference>
<dbReference type="NCBIfam" id="NF003806">
    <property type="entry name" value="PRK05395.1-3"/>
    <property type="match status" value="1"/>
</dbReference>
<dbReference type="NCBIfam" id="NF003807">
    <property type="entry name" value="PRK05395.1-4"/>
    <property type="match status" value="1"/>
</dbReference>
<dbReference type="PANTHER" id="PTHR21272">
    <property type="entry name" value="CATABOLIC 3-DEHYDROQUINASE"/>
    <property type="match status" value="1"/>
</dbReference>
<dbReference type="PANTHER" id="PTHR21272:SF3">
    <property type="entry name" value="CATABOLIC 3-DEHYDROQUINASE"/>
    <property type="match status" value="1"/>
</dbReference>
<dbReference type="Pfam" id="PF01220">
    <property type="entry name" value="DHquinase_II"/>
    <property type="match status" value="1"/>
</dbReference>
<dbReference type="PIRSF" id="PIRSF001399">
    <property type="entry name" value="DHquinase_II"/>
    <property type="match status" value="1"/>
</dbReference>
<dbReference type="SUPFAM" id="SSF52304">
    <property type="entry name" value="Type II 3-dehydroquinate dehydratase"/>
    <property type="match status" value="1"/>
</dbReference>
<dbReference type="PROSITE" id="PS01029">
    <property type="entry name" value="DEHYDROQUINASE_II"/>
    <property type="match status" value="1"/>
</dbReference>
<gene>
    <name evidence="1" type="primary">aroQ</name>
    <name type="ordered locus">Mmar10_1267</name>
</gene>
<keyword id="KW-0028">Amino-acid biosynthesis</keyword>
<keyword id="KW-0057">Aromatic amino acid biosynthesis</keyword>
<keyword id="KW-0456">Lyase</keyword>
<keyword id="KW-1185">Reference proteome</keyword>
<protein>
    <recommendedName>
        <fullName evidence="1">3-dehydroquinate dehydratase</fullName>
        <shortName evidence="1">3-dehydroquinase</shortName>
        <ecNumber evidence="1">4.2.1.10</ecNumber>
    </recommendedName>
    <alternativeName>
        <fullName evidence="1">Type II DHQase</fullName>
    </alternativeName>
</protein>
<feature type="chain" id="PRO_1000023482" description="3-dehydroquinate dehydratase">
    <location>
        <begin position="1"/>
        <end position="146"/>
    </location>
</feature>
<feature type="active site" description="Proton acceptor" evidence="1">
    <location>
        <position position="24"/>
    </location>
</feature>
<feature type="active site" description="Proton donor" evidence="1">
    <location>
        <position position="101"/>
    </location>
</feature>
<feature type="binding site" evidence="1">
    <location>
        <position position="75"/>
    </location>
    <ligand>
        <name>substrate</name>
    </ligand>
</feature>
<feature type="binding site" evidence="1">
    <location>
        <position position="81"/>
    </location>
    <ligand>
        <name>substrate</name>
    </ligand>
</feature>
<feature type="binding site" evidence="1">
    <location>
        <position position="88"/>
    </location>
    <ligand>
        <name>substrate</name>
    </ligand>
</feature>
<feature type="binding site" evidence="1">
    <location>
        <begin position="102"/>
        <end position="103"/>
    </location>
    <ligand>
        <name>substrate</name>
    </ligand>
</feature>
<feature type="binding site" evidence="1">
    <location>
        <position position="112"/>
    </location>
    <ligand>
        <name>substrate</name>
    </ligand>
</feature>
<feature type="site" description="Transition state stabilizer" evidence="1">
    <location>
        <position position="19"/>
    </location>
</feature>
<reference key="1">
    <citation type="submission" date="2006-08" db="EMBL/GenBank/DDBJ databases">
        <title>Complete sequence of Maricaulis maris MCS10.</title>
        <authorList>
            <consortium name="US DOE Joint Genome Institute"/>
            <person name="Copeland A."/>
            <person name="Lucas S."/>
            <person name="Lapidus A."/>
            <person name="Barry K."/>
            <person name="Detter J.C."/>
            <person name="Glavina del Rio T."/>
            <person name="Hammon N."/>
            <person name="Israni S."/>
            <person name="Dalin E."/>
            <person name="Tice H."/>
            <person name="Pitluck S."/>
            <person name="Saunders E."/>
            <person name="Brettin T."/>
            <person name="Bruce D."/>
            <person name="Han C."/>
            <person name="Tapia R."/>
            <person name="Gilna P."/>
            <person name="Schmutz J."/>
            <person name="Larimer F."/>
            <person name="Land M."/>
            <person name="Hauser L."/>
            <person name="Kyrpides N."/>
            <person name="Mikhailova N."/>
            <person name="Viollier P."/>
            <person name="Stephens C."/>
            <person name="Richardson P."/>
        </authorList>
    </citation>
    <scope>NUCLEOTIDE SEQUENCE [LARGE SCALE GENOMIC DNA]</scope>
    <source>
        <strain>MCS10</strain>
    </source>
</reference>
<evidence type="ECO:0000255" key="1">
    <source>
        <dbReference type="HAMAP-Rule" id="MF_00169"/>
    </source>
</evidence>
<sequence length="146" mass="15884">MTQPIHILNGPNLNLLGTREPDVYGTLSLKEIEQACARHARDLGYEILFRQSNHEGELIDWLHDANVNACAVVFNPAAFTHTSVALHDAVRAIEPPVIEVHLSQTAAREAFRHHSYIALAARGSITGLGLQSYLLGINAAITSLGN</sequence>